<dbReference type="EMBL" id="AE010299">
    <property type="protein sequence ID" value="AAM04893.1"/>
    <property type="molecule type" value="Genomic_DNA"/>
</dbReference>
<dbReference type="RefSeq" id="WP_011021493.1">
    <property type="nucleotide sequence ID" value="NC_003552.1"/>
</dbReference>
<dbReference type="SMR" id="Q8TQR1"/>
<dbReference type="STRING" id="188937.MA_1479"/>
<dbReference type="EnsemblBacteria" id="AAM04893">
    <property type="protein sequence ID" value="AAM04893"/>
    <property type="gene ID" value="MA_1479"/>
</dbReference>
<dbReference type="GeneID" id="1473367"/>
<dbReference type="KEGG" id="mac:MA_1479"/>
<dbReference type="HOGENOM" id="CLU_017633_0_7_2"/>
<dbReference type="InParanoid" id="Q8TQR1"/>
<dbReference type="OrthoDB" id="8967at2157"/>
<dbReference type="PhylomeDB" id="Q8TQR1"/>
<dbReference type="Proteomes" id="UP000002487">
    <property type="component" value="Chromosome"/>
</dbReference>
<dbReference type="GO" id="GO:0005737">
    <property type="term" value="C:cytoplasm"/>
    <property type="evidence" value="ECO:0000318"/>
    <property type="project" value="GO_Central"/>
</dbReference>
<dbReference type="GO" id="GO:0005524">
    <property type="term" value="F:ATP binding"/>
    <property type="evidence" value="ECO:0007669"/>
    <property type="project" value="InterPro"/>
</dbReference>
<dbReference type="GO" id="GO:0031072">
    <property type="term" value="F:heat shock protein binding"/>
    <property type="evidence" value="ECO:0007669"/>
    <property type="project" value="InterPro"/>
</dbReference>
<dbReference type="GO" id="GO:0051082">
    <property type="term" value="F:unfolded protein binding"/>
    <property type="evidence" value="ECO:0000318"/>
    <property type="project" value="GO_Central"/>
</dbReference>
<dbReference type="GO" id="GO:0008270">
    <property type="term" value="F:zinc ion binding"/>
    <property type="evidence" value="ECO:0007669"/>
    <property type="project" value="UniProtKB-UniRule"/>
</dbReference>
<dbReference type="GO" id="GO:0051085">
    <property type="term" value="P:chaperone cofactor-dependent protein refolding"/>
    <property type="evidence" value="ECO:0000318"/>
    <property type="project" value="GO_Central"/>
</dbReference>
<dbReference type="GO" id="GO:0006260">
    <property type="term" value="P:DNA replication"/>
    <property type="evidence" value="ECO:0007669"/>
    <property type="project" value="UniProtKB-KW"/>
</dbReference>
<dbReference type="GO" id="GO:0042026">
    <property type="term" value="P:protein refolding"/>
    <property type="evidence" value="ECO:0000318"/>
    <property type="project" value="GO_Central"/>
</dbReference>
<dbReference type="GO" id="GO:0009408">
    <property type="term" value="P:response to heat"/>
    <property type="evidence" value="ECO:0007669"/>
    <property type="project" value="InterPro"/>
</dbReference>
<dbReference type="CDD" id="cd06257">
    <property type="entry name" value="DnaJ"/>
    <property type="match status" value="1"/>
</dbReference>
<dbReference type="CDD" id="cd10747">
    <property type="entry name" value="DnaJ_C"/>
    <property type="match status" value="1"/>
</dbReference>
<dbReference type="CDD" id="cd10719">
    <property type="entry name" value="DnaJ_zf"/>
    <property type="match status" value="1"/>
</dbReference>
<dbReference type="FunFam" id="2.60.260.20:FF:000005">
    <property type="entry name" value="Chaperone protein dnaJ 1, mitochondrial"/>
    <property type="match status" value="1"/>
</dbReference>
<dbReference type="FunFam" id="1.10.287.110:FF:000031">
    <property type="entry name" value="Molecular chaperone DnaJ"/>
    <property type="match status" value="1"/>
</dbReference>
<dbReference type="FunFam" id="2.10.230.10:FF:000002">
    <property type="entry name" value="Molecular chaperone DnaJ"/>
    <property type="match status" value="1"/>
</dbReference>
<dbReference type="Gene3D" id="1.10.287.110">
    <property type="entry name" value="DnaJ domain"/>
    <property type="match status" value="1"/>
</dbReference>
<dbReference type="Gene3D" id="2.10.230.10">
    <property type="entry name" value="Heat shock protein DnaJ, cysteine-rich domain"/>
    <property type="match status" value="1"/>
</dbReference>
<dbReference type="Gene3D" id="2.60.260.20">
    <property type="entry name" value="Urease metallochaperone UreE, N-terminal domain"/>
    <property type="match status" value="2"/>
</dbReference>
<dbReference type="HAMAP" id="MF_01152">
    <property type="entry name" value="DnaJ"/>
    <property type="match status" value="1"/>
</dbReference>
<dbReference type="InterPro" id="IPR012724">
    <property type="entry name" value="DnaJ"/>
</dbReference>
<dbReference type="InterPro" id="IPR002939">
    <property type="entry name" value="DnaJ_C"/>
</dbReference>
<dbReference type="InterPro" id="IPR001623">
    <property type="entry name" value="DnaJ_domain"/>
</dbReference>
<dbReference type="InterPro" id="IPR018253">
    <property type="entry name" value="DnaJ_domain_CS"/>
</dbReference>
<dbReference type="InterPro" id="IPR008971">
    <property type="entry name" value="HSP40/DnaJ_pept-bd"/>
</dbReference>
<dbReference type="InterPro" id="IPR001305">
    <property type="entry name" value="HSP_DnaJ_Cys-rich_dom"/>
</dbReference>
<dbReference type="InterPro" id="IPR036410">
    <property type="entry name" value="HSP_DnaJ_Cys-rich_dom_sf"/>
</dbReference>
<dbReference type="InterPro" id="IPR036869">
    <property type="entry name" value="J_dom_sf"/>
</dbReference>
<dbReference type="NCBIfam" id="TIGR02349">
    <property type="entry name" value="DnaJ_bact"/>
    <property type="match status" value="1"/>
</dbReference>
<dbReference type="NCBIfam" id="NF008035">
    <property type="entry name" value="PRK10767.1"/>
    <property type="match status" value="1"/>
</dbReference>
<dbReference type="NCBIfam" id="NF010891">
    <property type="entry name" value="PRK14298.1"/>
    <property type="match status" value="1"/>
</dbReference>
<dbReference type="PANTHER" id="PTHR43096">
    <property type="entry name" value="DNAJ HOMOLOG 1, MITOCHONDRIAL-RELATED"/>
    <property type="match status" value="1"/>
</dbReference>
<dbReference type="PANTHER" id="PTHR43096:SF52">
    <property type="entry name" value="DNAJ HOMOLOG 1, MITOCHONDRIAL-RELATED"/>
    <property type="match status" value="1"/>
</dbReference>
<dbReference type="Pfam" id="PF00226">
    <property type="entry name" value="DnaJ"/>
    <property type="match status" value="1"/>
</dbReference>
<dbReference type="Pfam" id="PF01556">
    <property type="entry name" value="DnaJ_C"/>
    <property type="match status" value="1"/>
</dbReference>
<dbReference type="Pfam" id="PF00684">
    <property type="entry name" value="DnaJ_CXXCXGXG"/>
    <property type="match status" value="1"/>
</dbReference>
<dbReference type="PRINTS" id="PR00625">
    <property type="entry name" value="JDOMAIN"/>
</dbReference>
<dbReference type="SMART" id="SM00271">
    <property type="entry name" value="DnaJ"/>
    <property type="match status" value="1"/>
</dbReference>
<dbReference type="SUPFAM" id="SSF46565">
    <property type="entry name" value="Chaperone J-domain"/>
    <property type="match status" value="1"/>
</dbReference>
<dbReference type="SUPFAM" id="SSF57938">
    <property type="entry name" value="DnaJ/Hsp40 cysteine-rich domain"/>
    <property type="match status" value="1"/>
</dbReference>
<dbReference type="SUPFAM" id="SSF49493">
    <property type="entry name" value="HSP40/DnaJ peptide-binding domain"/>
    <property type="match status" value="2"/>
</dbReference>
<dbReference type="PROSITE" id="PS00636">
    <property type="entry name" value="DNAJ_1"/>
    <property type="match status" value="1"/>
</dbReference>
<dbReference type="PROSITE" id="PS50076">
    <property type="entry name" value="DNAJ_2"/>
    <property type="match status" value="1"/>
</dbReference>
<dbReference type="PROSITE" id="PS51188">
    <property type="entry name" value="ZF_CR"/>
    <property type="match status" value="1"/>
</dbReference>
<feature type="chain" id="PRO_0000070948" description="Chaperone protein DnaJ">
    <location>
        <begin position="1"/>
        <end position="382"/>
    </location>
</feature>
<feature type="domain" description="J" evidence="1">
    <location>
        <begin position="6"/>
        <end position="70"/>
    </location>
</feature>
<feature type="repeat" description="CXXCXGXG motif">
    <location>
        <begin position="144"/>
        <end position="151"/>
    </location>
</feature>
<feature type="repeat" description="CXXCXGXG motif">
    <location>
        <begin position="161"/>
        <end position="168"/>
    </location>
</feature>
<feature type="repeat" description="CXXCXGXG motif">
    <location>
        <begin position="187"/>
        <end position="194"/>
    </location>
</feature>
<feature type="repeat" description="CXXCXGXG motif">
    <location>
        <begin position="201"/>
        <end position="208"/>
    </location>
</feature>
<feature type="zinc finger region" description="CR-type" evidence="1">
    <location>
        <begin position="131"/>
        <end position="213"/>
    </location>
</feature>
<feature type="region of interest" description="Disordered" evidence="2">
    <location>
        <begin position="146"/>
        <end position="168"/>
    </location>
</feature>
<feature type="region of interest" description="Disordered" evidence="2">
    <location>
        <begin position="348"/>
        <end position="382"/>
    </location>
</feature>
<feature type="compositionally biased region" description="Basic and acidic residues" evidence="2">
    <location>
        <begin position="371"/>
        <end position="382"/>
    </location>
</feature>
<feature type="binding site" evidence="1">
    <location>
        <position position="144"/>
    </location>
    <ligand>
        <name>Zn(2+)</name>
        <dbReference type="ChEBI" id="CHEBI:29105"/>
        <label>1</label>
    </ligand>
</feature>
<feature type="binding site" evidence="1">
    <location>
        <position position="147"/>
    </location>
    <ligand>
        <name>Zn(2+)</name>
        <dbReference type="ChEBI" id="CHEBI:29105"/>
        <label>1</label>
    </ligand>
</feature>
<feature type="binding site" evidence="1">
    <location>
        <position position="161"/>
    </location>
    <ligand>
        <name>Zn(2+)</name>
        <dbReference type="ChEBI" id="CHEBI:29105"/>
        <label>2</label>
    </ligand>
</feature>
<feature type="binding site" evidence="1">
    <location>
        <position position="164"/>
    </location>
    <ligand>
        <name>Zn(2+)</name>
        <dbReference type="ChEBI" id="CHEBI:29105"/>
        <label>2</label>
    </ligand>
</feature>
<feature type="binding site" evidence="1">
    <location>
        <position position="187"/>
    </location>
    <ligand>
        <name>Zn(2+)</name>
        <dbReference type="ChEBI" id="CHEBI:29105"/>
        <label>2</label>
    </ligand>
</feature>
<feature type="binding site" evidence="1">
    <location>
        <position position="190"/>
    </location>
    <ligand>
        <name>Zn(2+)</name>
        <dbReference type="ChEBI" id="CHEBI:29105"/>
        <label>2</label>
    </ligand>
</feature>
<feature type="binding site" evidence="1">
    <location>
        <position position="201"/>
    </location>
    <ligand>
        <name>Zn(2+)</name>
        <dbReference type="ChEBI" id="CHEBI:29105"/>
        <label>1</label>
    </ligand>
</feature>
<feature type="binding site" evidence="1">
    <location>
        <position position="204"/>
    </location>
    <ligand>
        <name>Zn(2+)</name>
        <dbReference type="ChEBI" id="CHEBI:29105"/>
        <label>1</label>
    </ligand>
</feature>
<evidence type="ECO:0000255" key="1">
    <source>
        <dbReference type="HAMAP-Rule" id="MF_01152"/>
    </source>
</evidence>
<evidence type="ECO:0000256" key="2">
    <source>
        <dbReference type="SAM" id="MobiDB-lite"/>
    </source>
</evidence>
<comment type="function">
    <text evidence="1">Participates actively in the response to hyperosmotic and heat shock by preventing the aggregation of stress-denatured proteins and by disaggregating proteins, also in an autonomous, DnaK-independent fashion. Unfolded proteins bind initially to DnaJ; upon interaction with the DnaJ-bound protein, DnaK hydrolyzes its bound ATP, resulting in the formation of a stable complex. GrpE releases ADP from DnaK; ATP binding to DnaK triggers the release of the substrate protein, thus completing the reaction cycle. Several rounds of ATP-dependent interactions between DnaJ, DnaK and GrpE are required for fully efficient folding. Also involved, together with DnaK and GrpE, in the DNA replication of plasmids through activation of initiation proteins.</text>
</comment>
<comment type="cofactor">
    <cofactor evidence="1">
        <name>Zn(2+)</name>
        <dbReference type="ChEBI" id="CHEBI:29105"/>
    </cofactor>
    <text evidence="1">Binds 2 Zn(2+) ions per monomer.</text>
</comment>
<comment type="subunit">
    <text evidence="1">Homodimer.</text>
</comment>
<comment type="subcellular location">
    <subcellularLocation>
        <location evidence="1">Cytoplasm</location>
    </subcellularLocation>
</comment>
<comment type="domain">
    <text evidence="1">The J domain is necessary and sufficient to stimulate DnaK ATPase activity. Zinc center 1 plays an important role in the autonomous, DnaK-independent chaperone activity of DnaJ. Zinc center 2 is essential for interaction with DnaK and for DnaJ activity.</text>
</comment>
<comment type="similarity">
    <text evidence="1">Belongs to the DnaJ family.</text>
</comment>
<keyword id="KW-0143">Chaperone</keyword>
<keyword id="KW-0963">Cytoplasm</keyword>
<keyword id="KW-0235">DNA replication</keyword>
<keyword id="KW-0479">Metal-binding</keyword>
<keyword id="KW-1185">Reference proteome</keyword>
<keyword id="KW-0677">Repeat</keyword>
<keyword id="KW-0346">Stress response</keyword>
<keyword id="KW-0862">Zinc</keyword>
<keyword id="KW-0863">Zinc-finger</keyword>
<protein>
    <recommendedName>
        <fullName evidence="1">Chaperone protein DnaJ</fullName>
    </recommendedName>
</protein>
<name>DNAJ_METAC</name>
<reference key="1">
    <citation type="journal article" date="2002" name="Genome Res.">
        <title>The genome of Methanosarcina acetivorans reveals extensive metabolic and physiological diversity.</title>
        <authorList>
            <person name="Galagan J.E."/>
            <person name="Nusbaum C."/>
            <person name="Roy A."/>
            <person name="Endrizzi M.G."/>
            <person name="Macdonald P."/>
            <person name="FitzHugh W."/>
            <person name="Calvo S."/>
            <person name="Engels R."/>
            <person name="Smirnov S."/>
            <person name="Atnoor D."/>
            <person name="Brown A."/>
            <person name="Allen N."/>
            <person name="Naylor J."/>
            <person name="Stange-Thomann N."/>
            <person name="DeArellano K."/>
            <person name="Johnson R."/>
            <person name="Linton L."/>
            <person name="McEwan P."/>
            <person name="McKernan K."/>
            <person name="Talamas J."/>
            <person name="Tirrell A."/>
            <person name="Ye W."/>
            <person name="Zimmer A."/>
            <person name="Barber R.D."/>
            <person name="Cann I."/>
            <person name="Graham D.E."/>
            <person name="Grahame D.A."/>
            <person name="Guss A.M."/>
            <person name="Hedderich R."/>
            <person name="Ingram-Smith C."/>
            <person name="Kuettner H.C."/>
            <person name="Krzycki J.A."/>
            <person name="Leigh J.A."/>
            <person name="Li W."/>
            <person name="Liu J."/>
            <person name="Mukhopadhyay B."/>
            <person name="Reeve J.N."/>
            <person name="Smith K."/>
            <person name="Springer T.A."/>
            <person name="Umayam L.A."/>
            <person name="White O."/>
            <person name="White R.H."/>
            <person name="de Macario E.C."/>
            <person name="Ferry J.G."/>
            <person name="Jarrell K.F."/>
            <person name="Jing H."/>
            <person name="Macario A.J.L."/>
            <person name="Paulsen I.T."/>
            <person name="Pritchett M."/>
            <person name="Sowers K.R."/>
            <person name="Swanson R.V."/>
            <person name="Zinder S.H."/>
            <person name="Lander E."/>
            <person name="Metcalf W.W."/>
            <person name="Birren B."/>
        </authorList>
    </citation>
    <scope>NUCLEOTIDE SEQUENCE [LARGE SCALE GENOMIC DNA]</scope>
    <source>
        <strain>ATCC 35395 / DSM 2834 / JCM 12185 / C2A</strain>
    </source>
</reference>
<gene>
    <name evidence="1" type="primary">dnaJ</name>
    <name type="ordered locus">MA_1479</name>
</gene>
<proteinExistence type="inferred from homology"/>
<organism>
    <name type="scientific">Methanosarcina acetivorans (strain ATCC 35395 / DSM 2834 / JCM 12185 / C2A)</name>
    <dbReference type="NCBI Taxonomy" id="188937"/>
    <lineage>
        <taxon>Archaea</taxon>
        <taxon>Methanobacteriati</taxon>
        <taxon>Methanobacteriota</taxon>
        <taxon>Stenosarchaea group</taxon>
        <taxon>Methanomicrobia</taxon>
        <taxon>Methanosarcinales</taxon>
        <taxon>Methanosarcinaceae</taxon>
        <taxon>Methanosarcina</taxon>
    </lineage>
</organism>
<accession>Q8TQR1</accession>
<sequence>MATKRDYYEILGLPKDASVEDIKKTYRKLALQYHPDRNKDPGAEDKFKEISEAYAVLSDTEKRAQYDRFGHAGIDNQYSAEDIFRGADFGGFGDIFEMFFGGGRRGGPMGPRRGSDLQYDLYITFEEAAFGVRKDIDIPRTERCSTCSGTGAKPGTSPKRCPTCGGTGQVRTTRSTLGMQFISTTTCSTCHGRGQIIESPCPVCGGAGRVRNKRTITVNVPAGADSGMSLRLSGEGDSGEPGAPSGDLYIIIHVMEHRHFKRVDYDVISELSITFTQAALGADVMVDTLYGKVKMNIPAGTQTHSVFRLRDKGIQRLHGHGKGDQLVRVIIKTPTKLNQEQKELLRQFENLSKGKKPQEEEKSKAEKHKKGIFEKVKDAFES</sequence>